<protein>
    <recommendedName>
        <fullName evidence="1">Adenosylhomocysteinase</fullName>
        <ecNumber evidence="1">3.13.2.1</ecNumber>
    </recommendedName>
    <alternativeName>
        <fullName evidence="1">S-adenosyl-L-homocysteine hydrolase</fullName>
        <shortName evidence="1">AdoHcyase</shortName>
    </alternativeName>
</protein>
<accession>B5ZV80</accession>
<gene>
    <name evidence="1" type="primary">ahcY</name>
    <name type="ordered locus">Rleg2_3964</name>
</gene>
<keyword id="KW-0963">Cytoplasm</keyword>
<keyword id="KW-0378">Hydrolase</keyword>
<keyword id="KW-0520">NAD</keyword>
<keyword id="KW-0554">One-carbon metabolism</keyword>
<keyword id="KW-1185">Reference proteome</keyword>
<proteinExistence type="inferred from homology"/>
<sequence length="466" mass="50754">MSTEKDYVVADIGLADFGRKEITIAETEMPGLMSCRTEFGQAKPLKGARITGSLHMTIQTAVLIETLVALGAEVRWASCNIFSTQDHAAAAIAAAGVPVFAIKGESLEDYWVYTDKIFQWADGGLSNMILDDGGDATMYILLGARAEAGEDVLSHPHSEEEEILFAQIKKRLAASPGWFTKQRDAIKGVTEETTTGVNRLYQLSQKGLLPFPAINVNDSVTKSKFDNKYGCKESLVDGIRRGTDVMMAGKVAVVCGYGDVGKGSAASLSGAGARVKVTEADPICALQAAMDGYEVVLLEDVVSSADIFITTTGNKDVIRIDHMRQMKDMAIVGNIGHFDNEIEVAALRNLKWTNVKPQVDLIEFPKGNRIILLSEGRLLNLGNATGHPSFVMSASFTNQTLAQIELFTKPDQYSNQVYILPKHLDEKVARLHLDKLGVKLTQLSEEQAAYIGVSPKGPFKSDHYRY</sequence>
<organism>
    <name type="scientific">Rhizobium leguminosarum bv. trifolii (strain WSM2304)</name>
    <dbReference type="NCBI Taxonomy" id="395492"/>
    <lineage>
        <taxon>Bacteria</taxon>
        <taxon>Pseudomonadati</taxon>
        <taxon>Pseudomonadota</taxon>
        <taxon>Alphaproteobacteria</taxon>
        <taxon>Hyphomicrobiales</taxon>
        <taxon>Rhizobiaceae</taxon>
        <taxon>Rhizobium/Agrobacterium group</taxon>
        <taxon>Rhizobium</taxon>
    </lineage>
</organism>
<feature type="chain" id="PRO_1000196676" description="Adenosylhomocysteinase">
    <location>
        <begin position="1"/>
        <end position="466"/>
    </location>
</feature>
<feature type="binding site" evidence="1">
    <location>
        <position position="57"/>
    </location>
    <ligand>
        <name>substrate</name>
    </ligand>
</feature>
<feature type="binding site" evidence="1">
    <location>
        <position position="132"/>
    </location>
    <ligand>
        <name>substrate</name>
    </ligand>
</feature>
<feature type="binding site" evidence="1">
    <location>
        <position position="192"/>
    </location>
    <ligand>
        <name>substrate</name>
    </ligand>
</feature>
<feature type="binding site" evidence="1">
    <location>
        <begin position="193"/>
        <end position="195"/>
    </location>
    <ligand>
        <name>NAD(+)</name>
        <dbReference type="ChEBI" id="CHEBI:57540"/>
    </ligand>
</feature>
<feature type="binding site" evidence="1">
    <location>
        <position position="222"/>
    </location>
    <ligand>
        <name>substrate</name>
    </ligand>
</feature>
<feature type="binding site" evidence="1">
    <location>
        <position position="226"/>
    </location>
    <ligand>
        <name>substrate</name>
    </ligand>
</feature>
<feature type="binding site" evidence="1">
    <location>
        <position position="227"/>
    </location>
    <ligand>
        <name>NAD(+)</name>
        <dbReference type="ChEBI" id="CHEBI:57540"/>
    </ligand>
</feature>
<feature type="binding site" evidence="1">
    <location>
        <begin position="256"/>
        <end position="261"/>
    </location>
    <ligand>
        <name>NAD(+)</name>
        <dbReference type="ChEBI" id="CHEBI:57540"/>
    </ligand>
</feature>
<feature type="binding site" evidence="1">
    <location>
        <position position="279"/>
    </location>
    <ligand>
        <name>NAD(+)</name>
        <dbReference type="ChEBI" id="CHEBI:57540"/>
    </ligand>
</feature>
<feature type="binding site" evidence="1">
    <location>
        <position position="314"/>
    </location>
    <ligand>
        <name>NAD(+)</name>
        <dbReference type="ChEBI" id="CHEBI:57540"/>
    </ligand>
</feature>
<feature type="binding site" evidence="1">
    <location>
        <begin position="335"/>
        <end position="337"/>
    </location>
    <ligand>
        <name>NAD(+)</name>
        <dbReference type="ChEBI" id="CHEBI:57540"/>
    </ligand>
</feature>
<feature type="binding site" evidence="1">
    <location>
        <position position="380"/>
    </location>
    <ligand>
        <name>NAD(+)</name>
        <dbReference type="ChEBI" id="CHEBI:57540"/>
    </ligand>
</feature>
<dbReference type="EC" id="3.13.2.1" evidence="1"/>
<dbReference type="EMBL" id="CP001191">
    <property type="protein sequence ID" value="ACI57226.1"/>
    <property type="molecule type" value="Genomic_DNA"/>
</dbReference>
<dbReference type="RefSeq" id="WP_003589494.1">
    <property type="nucleotide sequence ID" value="NC_011369.1"/>
</dbReference>
<dbReference type="SMR" id="B5ZV80"/>
<dbReference type="STRING" id="395492.Rleg2_3964"/>
<dbReference type="KEGG" id="rlt:Rleg2_3964"/>
<dbReference type="eggNOG" id="COG0499">
    <property type="taxonomic scope" value="Bacteria"/>
</dbReference>
<dbReference type="HOGENOM" id="CLU_025194_2_1_5"/>
<dbReference type="UniPathway" id="UPA00314">
    <property type="reaction ID" value="UER00076"/>
</dbReference>
<dbReference type="Proteomes" id="UP000008330">
    <property type="component" value="Chromosome"/>
</dbReference>
<dbReference type="GO" id="GO:0005829">
    <property type="term" value="C:cytosol"/>
    <property type="evidence" value="ECO:0007669"/>
    <property type="project" value="TreeGrafter"/>
</dbReference>
<dbReference type="GO" id="GO:0004013">
    <property type="term" value="F:adenosylhomocysteinase activity"/>
    <property type="evidence" value="ECO:0007669"/>
    <property type="project" value="UniProtKB-UniRule"/>
</dbReference>
<dbReference type="GO" id="GO:0071269">
    <property type="term" value="P:L-homocysteine biosynthetic process"/>
    <property type="evidence" value="ECO:0007669"/>
    <property type="project" value="UniProtKB-UniRule"/>
</dbReference>
<dbReference type="GO" id="GO:0006730">
    <property type="term" value="P:one-carbon metabolic process"/>
    <property type="evidence" value="ECO:0007669"/>
    <property type="project" value="UniProtKB-KW"/>
</dbReference>
<dbReference type="GO" id="GO:0033353">
    <property type="term" value="P:S-adenosylmethionine cycle"/>
    <property type="evidence" value="ECO:0007669"/>
    <property type="project" value="TreeGrafter"/>
</dbReference>
<dbReference type="CDD" id="cd00401">
    <property type="entry name" value="SAHH"/>
    <property type="match status" value="1"/>
</dbReference>
<dbReference type="FunFam" id="3.40.50.720:FF:000004">
    <property type="entry name" value="Adenosylhomocysteinase"/>
    <property type="match status" value="1"/>
</dbReference>
<dbReference type="Gene3D" id="3.40.50.1480">
    <property type="entry name" value="Adenosylhomocysteinase-like"/>
    <property type="match status" value="1"/>
</dbReference>
<dbReference type="Gene3D" id="3.40.50.720">
    <property type="entry name" value="NAD(P)-binding Rossmann-like Domain"/>
    <property type="match status" value="1"/>
</dbReference>
<dbReference type="HAMAP" id="MF_00563">
    <property type="entry name" value="AdoHcyase"/>
    <property type="match status" value="1"/>
</dbReference>
<dbReference type="InterPro" id="IPR042172">
    <property type="entry name" value="Adenosylhomocyst_ase-like_sf"/>
</dbReference>
<dbReference type="InterPro" id="IPR000043">
    <property type="entry name" value="Adenosylhomocysteinase-like"/>
</dbReference>
<dbReference type="InterPro" id="IPR015878">
    <property type="entry name" value="Ado_hCys_hydrolase_NAD-bd"/>
</dbReference>
<dbReference type="InterPro" id="IPR036291">
    <property type="entry name" value="NAD(P)-bd_dom_sf"/>
</dbReference>
<dbReference type="InterPro" id="IPR020082">
    <property type="entry name" value="S-Ado-L-homoCys_hydrolase_CS"/>
</dbReference>
<dbReference type="NCBIfam" id="TIGR00936">
    <property type="entry name" value="ahcY"/>
    <property type="match status" value="1"/>
</dbReference>
<dbReference type="NCBIfam" id="NF004005">
    <property type="entry name" value="PRK05476.2-3"/>
    <property type="match status" value="1"/>
</dbReference>
<dbReference type="PANTHER" id="PTHR23420">
    <property type="entry name" value="ADENOSYLHOMOCYSTEINASE"/>
    <property type="match status" value="1"/>
</dbReference>
<dbReference type="PANTHER" id="PTHR23420:SF0">
    <property type="entry name" value="ADENOSYLHOMOCYSTEINASE"/>
    <property type="match status" value="1"/>
</dbReference>
<dbReference type="Pfam" id="PF05221">
    <property type="entry name" value="AdoHcyase"/>
    <property type="match status" value="1"/>
</dbReference>
<dbReference type="Pfam" id="PF00670">
    <property type="entry name" value="AdoHcyase_NAD"/>
    <property type="match status" value="1"/>
</dbReference>
<dbReference type="PIRSF" id="PIRSF001109">
    <property type="entry name" value="Ad_hcy_hydrolase"/>
    <property type="match status" value="1"/>
</dbReference>
<dbReference type="SMART" id="SM00996">
    <property type="entry name" value="AdoHcyase"/>
    <property type="match status" value="1"/>
</dbReference>
<dbReference type="SMART" id="SM00997">
    <property type="entry name" value="AdoHcyase_NAD"/>
    <property type="match status" value="1"/>
</dbReference>
<dbReference type="SUPFAM" id="SSF52283">
    <property type="entry name" value="Formate/glycerate dehydrogenase catalytic domain-like"/>
    <property type="match status" value="1"/>
</dbReference>
<dbReference type="SUPFAM" id="SSF51735">
    <property type="entry name" value="NAD(P)-binding Rossmann-fold domains"/>
    <property type="match status" value="1"/>
</dbReference>
<dbReference type="PROSITE" id="PS00738">
    <property type="entry name" value="ADOHCYASE_1"/>
    <property type="match status" value="1"/>
</dbReference>
<dbReference type="PROSITE" id="PS00739">
    <property type="entry name" value="ADOHCYASE_2"/>
    <property type="match status" value="1"/>
</dbReference>
<comment type="function">
    <text evidence="1">May play a key role in the regulation of the intracellular concentration of adenosylhomocysteine.</text>
</comment>
<comment type="catalytic activity">
    <reaction evidence="1">
        <text>S-adenosyl-L-homocysteine + H2O = L-homocysteine + adenosine</text>
        <dbReference type="Rhea" id="RHEA:21708"/>
        <dbReference type="ChEBI" id="CHEBI:15377"/>
        <dbReference type="ChEBI" id="CHEBI:16335"/>
        <dbReference type="ChEBI" id="CHEBI:57856"/>
        <dbReference type="ChEBI" id="CHEBI:58199"/>
        <dbReference type="EC" id="3.13.2.1"/>
    </reaction>
</comment>
<comment type="cofactor">
    <cofactor evidence="1">
        <name>NAD(+)</name>
        <dbReference type="ChEBI" id="CHEBI:57540"/>
    </cofactor>
    <text evidence="1">Binds 1 NAD(+) per subunit.</text>
</comment>
<comment type="pathway">
    <text evidence="1">Amino-acid biosynthesis; L-homocysteine biosynthesis; L-homocysteine from S-adenosyl-L-homocysteine: step 1/1.</text>
</comment>
<comment type="subcellular location">
    <subcellularLocation>
        <location evidence="1">Cytoplasm</location>
    </subcellularLocation>
</comment>
<comment type="similarity">
    <text evidence="1">Belongs to the adenosylhomocysteinase family.</text>
</comment>
<evidence type="ECO:0000255" key="1">
    <source>
        <dbReference type="HAMAP-Rule" id="MF_00563"/>
    </source>
</evidence>
<reference key="1">
    <citation type="journal article" date="2010" name="Stand. Genomic Sci.">
        <title>Complete genome sequence of Rhizobium leguminosarum bv trifolii strain WSM2304, an effective microsymbiont of the South American clover Trifolium polymorphum.</title>
        <authorList>
            <person name="Reeve W."/>
            <person name="O'Hara G."/>
            <person name="Chain P."/>
            <person name="Ardley J."/>
            <person name="Brau L."/>
            <person name="Nandesena K."/>
            <person name="Tiwari R."/>
            <person name="Malfatti S."/>
            <person name="Kiss H."/>
            <person name="Lapidus A."/>
            <person name="Copeland A."/>
            <person name="Nolan M."/>
            <person name="Land M."/>
            <person name="Ivanova N."/>
            <person name="Mavromatis K."/>
            <person name="Markowitz V."/>
            <person name="Kyrpides N."/>
            <person name="Melino V."/>
            <person name="Denton M."/>
            <person name="Yates R."/>
            <person name="Howieson J."/>
        </authorList>
    </citation>
    <scope>NUCLEOTIDE SEQUENCE [LARGE SCALE GENOMIC DNA]</scope>
    <source>
        <strain>WSM2304</strain>
    </source>
</reference>
<name>SAHH_RHILW</name>